<accession>A0T0R7</accession>
<sequence>MVMDIRVLTPDRVICSTTADEVILPGLTGQVGVLDGHATLITALDTGLLRIKLADKWTPIILCGGLAEIDRNRVTVLVNDVEELVAVELSEATKELEKATSAIENAETSKARLDASVELKKATARLEGINYLS</sequence>
<feature type="chain" id="PRO_0000275227" description="ATP synthase epsilon chain, chloroplastic">
    <location>
        <begin position="1"/>
        <end position="133"/>
    </location>
</feature>
<evidence type="ECO:0000255" key="1">
    <source>
        <dbReference type="HAMAP-Rule" id="MF_00530"/>
    </source>
</evidence>
<organism>
    <name type="scientific">Thalassiosira pseudonana</name>
    <name type="common">Marine diatom</name>
    <name type="synonym">Cyclotella nana</name>
    <dbReference type="NCBI Taxonomy" id="35128"/>
    <lineage>
        <taxon>Eukaryota</taxon>
        <taxon>Sar</taxon>
        <taxon>Stramenopiles</taxon>
        <taxon>Ochrophyta</taxon>
        <taxon>Bacillariophyta</taxon>
        <taxon>Coscinodiscophyceae</taxon>
        <taxon>Thalassiosirophycidae</taxon>
        <taxon>Thalassiosirales</taxon>
        <taxon>Thalassiosiraceae</taxon>
        <taxon>Thalassiosira</taxon>
    </lineage>
</organism>
<reference key="1">
    <citation type="journal article" date="2007" name="Mol. Genet. Genomics">
        <title>Chloroplast genomes of the diatoms Phaeodactylum tricornutum and Thalassiosira pseudonana: comparison with other plastid genomes of the red lineage.</title>
        <authorList>
            <person name="Oudot-Le Secq M.-P."/>
            <person name="Grimwood J."/>
            <person name="Shapiro H."/>
            <person name="Armbrust E.V."/>
            <person name="Bowler C."/>
            <person name="Green B.R."/>
        </authorList>
    </citation>
    <scope>NUCLEOTIDE SEQUENCE [LARGE SCALE GENOMIC DNA]</scope>
    <source>
        <strain>CCMP1335 / NEPCC58 / CCAP 1085/12</strain>
    </source>
</reference>
<name>ATPE_THAPS</name>
<comment type="function">
    <text evidence="1">Produces ATP from ADP in the presence of a proton gradient across the membrane.</text>
</comment>
<comment type="subunit">
    <text evidence="1">F-type ATPases have 2 components, CF(1) - the catalytic core - and CF(0) - the membrane proton channel. CF(1) has five subunits: alpha(3), beta(3), gamma(1), delta(1), epsilon(1). CF(0) has three main subunits: a, b and c.</text>
</comment>
<comment type="subcellular location">
    <subcellularLocation>
        <location evidence="1">Plastid</location>
        <location evidence="1">Chloroplast thylakoid membrane</location>
        <topology evidence="1">Peripheral membrane protein</topology>
    </subcellularLocation>
</comment>
<comment type="similarity">
    <text evidence="1">Belongs to the ATPase epsilon chain family.</text>
</comment>
<dbReference type="EMBL" id="EF067921">
    <property type="protein sequence ID" value="ABK20752.1"/>
    <property type="molecule type" value="Genomic_DNA"/>
</dbReference>
<dbReference type="RefSeq" id="YP_874529.1">
    <property type="nucleotide sequence ID" value="NC_008589.1"/>
</dbReference>
<dbReference type="SMR" id="A0T0R7"/>
<dbReference type="STRING" id="35128.A0T0R7"/>
<dbReference type="GeneID" id="4524735"/>
<dbReference type="InParanoid" id="A0T0R7"/>
<dbReference type="GO" id="GO:0009535">
    <property type="term" value="C:chloroplast thylakoid membrane"/>
    <property type="evidence" value="ECO:0007669"/>
    <property type="project" value="UniProtKB-SubCell"/>
</dbReference>
<dbReference type="GO" id="GO:0045259">
    <property type="term" value="C:proton-transporting ATP synthase complex"/>
    <property type="evidence" value="ECO:0007669"/>
    <property type="project" value="UniProtKB-KW"/>
</dbReference>
<dbReference type="GO" id="GO:0005524">
    <property type="term" value="F:ATP binding"/>
    <property type="evidence" value="ECO:0007669"/>
    <property type="project" value="UniProtKB-UniRule"/>
</dbReference>
<dbReference type="GO" id="GO:0046933">
    <property type="term" value="F:proton-transporting ATP synthase activity, rotational mechanism"/>
    <property type="evidence" value="ECO:0007669"/>
    <property type="project" value="UniProtKB-UniRule"/>
</dbReference>
<dbReference type="GO" id="GO:0015986">
    <property type="term" value="P:proton motive force-driven ATP synthesis"/>
    <property type="evidence" value="ECO:0000318"/>
    <property type="project" value="GO_Central"/>
</dbReference>
<dbReference type="CDD" id="cd12152">
    <property type="entry name" value="F1-ATPase_delta"/>
    <property type="match status" value="1"/>
</dbReference>
<dbReference type="Gene3D" id="2.60.15.10">
    <property type="entry name" value="F0F1 ATP synthase delta/epsilon subunit, N-terminal"/>
    <property type="match status" value="1"/>
</dbReference>
<dbReference type="HAMAP" id="MF_00530">
    <property type="entry name" value="ATP_synth_epsil_bac"/>
    <property type="match status" value="1"/>
</dbReference>
<dbReference type="InterPro" id="IPR001469">
    <property type="entry name" value="ATP_synth_F1_dsu/esu"/>
</dbReference>
<dbReference type="InterPro" id="IPR020546">
    <property type="entry name" value="ATP_synth_F1_dsu/esu_N"/>
</dbReference>
<dbReference type="InterPro" id="IPR036771">
    <property type="entry name" value="ATPsynth_dsu/esu_N"/>
</dbReference>
<dbReference type="NCBIfam" id="TIGR01216">
    <property type="entry name" value="ATP_synt_epsi"/>
    <property type="match status" value="1"/>
</dbReference>
<dbReference type="PANTHER" id="PTHR13822">
    <property type="entry name" value="ATP SYNTHASE DELTA/EPSILON CHAIN"/>
    <property type="match status" value="1"/>
</dbReference>
<dbReference type="PANTHER" id="PTHR13822:SF10">
    <property type="entry name" value="ATP SYNTHASE EPSILON CHAIN, CHLOROPLASTIC"/>
    <property type="match status" value="1"/>
</dbReference>
<dbReference type="Pfam" id="PF02823">
    <property type="entry name" value="ATP-synt_DE_N"/>
    <property type="match status" value="1"/>
</dbReference>
<dbReference type="SUPFAM" id="SSF51344">
    <property type="entry name" value="Epsilon subunit of F1F0-ATP synthase N-terminal domain"/>
    <property type="match status" value="1"/>
</dbReference>
<proteinExistence type="inferred from homology"/>
<keyword id="KW-0066">ATP synthesis</keyword>
<keyword id="KW-0139">CF(1)</keyword>
<keyword id="KW-0150">Chloroplast</keyword>
<keyword id="KW-0375">Hydrogen ion transport</keyword>
<keyword id="KW-0406">Ion transport</keyword>
<keyword id="KW-0472">Membrane</keyword>
<keyword id="KW-0934">Plastid</keyword>
<keyword id="KW-0793">Thylakoid</keyword>
<keyword id="KW-0813">Transport</keyword>
<protein>
    <recommendedName>
        <fullName evidence="1">ATP synthase epsilon chain, chloroplastic</fullName>
    </recommendedName>
    <alternativeName>
        <fullName evidence="1">ATP synthase F1 sector epsilon subunit</fullName>
    </alternativeName>
    <alternativeName>
        <fullName evidence="1">F-ATPase epsilon subunit</fullName>
    </alternativeName>
</protein>
<gene>
    <name evidence="1" type="primary">atpE</name>
</gene>
<geneLocation type="chloroplast"/>